<name>RPOZ_BACC7</name>
<comment type="function">
    <text evidence="1">Promotes RNA polymerase assembly. Latches the N- and C-terminal regions of the beta' subunit thereby facilitating its interaction with the beta and alpha subunits.</text>
</comment>
<comment type="catalytic activity">
    <reaction evidence="1">
        <text>RNA(n) + a ribonucleoside 5'-triphosphate = RNA(n+1) + diphosphate</text>
        <dbReference type="Rhea" id="RHEA:21248"/>
        <dbReference type="Rhea" id="RHEA-COMP:14527"/>
        <dbReference type="Rhea" id="RHEA-COMP:17342"/>
        <dbReference type="ChEBI" id="CHEBI:33019"/>
        <dbReference type="ChEBI" id="CHEBI:61557"/>
        <dbReference type="ChEBI" id="CHEBI:140395"/>
        <dbReference type="EC" id="2.7.7.6"/>
    </reaction>
</comment>
<comment type="subunit">
    <text evidence="1">The RNAP catalytic core consists of 2 alpha, 1 beta, 1 beta' and 1 omega subunit. When a sigma factor is associated with the core the holoenzyme is formed, which can initiate transcription.</text>
</comment>
<comment type="similarity">
    <text evidence="1">Belongs to the RNA polymerase subunit omega family.</text>
</comment>
<keyword id="KW-0240">DNA-directed RNA polymerase</keyword>
<keyword id="KW-0548">Nucleotidyltransferase</keyword>
<keyword id="KW-0804">Transcription</keyword>
<keyword id="KW-0808">Transferase</keyword>
<evidence type="ECO:0000255" key="1">
    <source>
        <dbReference type="HAMAP-Rule" id="MF_00366"/>
    </source>
</evidence>
<feature type="chain" id="PRO_1000121189" description="DNA-directed RNA polymerase subunit omega">
    <location>
        <begin position="1"/>
        <end position="70"/>
    </location>
</feature>
<gene>
    <name evidence="1" type="primary">rpoZ</name>
    <name type="ordered locus">BCAH187_A3918</name>
</gene>
<dbReference type="EC" id="2.7.7.6" evidence="1"/>
<dbReference type="EMBL" id="CP001177">
    <property type="protein sequence ID" value="ACJ77993.1"/>
    <property type="molecule type" value="Genomic_DNA"/>
</dbReference>
<dbReference type="SMR" id="B7HLK3"/>
<dbReference type="KEGG" id="bcr:BCAH187_A3918"/>
<dbReference type="HOGENOM" id="CLU_125406_6_0_9"/>
<dbReference type="Proteomes" id="UP000002214">
    <property type="component" value="Chromosome"/>
</dbReference>
<dbReference type="GO" id="GO:0000428">
    <property type="term" value="C:DNA-directed RNA polymerase complex"/>
    <property type="evidence" value="ECO:0007669"/>
    <property type="project" value="UniProtKB-KW"/>
</dbReference>
<dbReference type="GO" id="GO:0003677">
    <property type="term" value="F:DNA binding"/>
    <property type="evidence" value="ECO:0007669"/>
    <property type="project" value="UniProtKB-UniRule"/>
</dbReference>
<dbReference type="GO" id="GO:0003899">
    <property type="term" value="F:DNA-directed RNA polymerase activity"/>
    <property type="evidence" value="ECO:0007669"/>
    <property type="project" value="UniProtKB-UniRule"/>
</dbReference>
<dbReference type="GO" id="GO:0006351">
    <property type="term" value="P:DNA-templated transcription"/>
    <property type="evidence" value="ECO:0007669"/>
    <property type="project" value="UniProtKB-UniRule"/>
</dbReference>
<dbReference type="Gene3D" id="3.90.940.10">
    <property type="match status" value="1"/>
</dbReference>
<dbReference type="HAMAP" id="MF_00366">
    <property type="entry name" value="RNApol_bact_RpoZ"/>
    <property type="match status" value="1"/>
</dbReference>
<dbReference type="InterPro" id="IPR003716">
    <property type="entry name" value="DNA-dir_RNA_pol_omega"/>
</dbReference>
<dbReference type="InterPro" id="IPR006110">
    <property type="entry name" value="Pol_omega/Rpo6/RPB6"/>
</dbReference>
<dbReference type="InterPro" id="IPR036161">
    <property type="entry name" value="RPB6/omega-like_sf"/>
</dbReference>
<dbReference type="NCBIfam" id="TIGR00690">
    <property type="entry name" value="rpoZ"/>
    <property type="match status" value="1"/>
</dbReference>
<dbReference type="PANTHER" id="PTHR34476">
    <property type="entry name" value="DNA-DIRECTED RNA POLYMERASE SUBUNIT OMEGA"/>
    <property type="match status" value="1"/>
</dbReference>
<dbReference type="PANTHER" id="PTHR34476:SF1">
    <property type="entry name" value="DNA-DIRECTED RNA POLYMERASE SUBUNIT OMEGA"/>
    <property type="match status" value="1"/>
</dbReference>
<dbReference type="Pfam" id="PF01192">
    <property type="entry name" value="RNA_pol_Rpb6"/>
    <property type="match status" value="1"/>
</dbReference>
<dbReference type="SMART" id="SM01409">
    <property type="entry name" value="RNA_pol_Rpb6"/>
    <property type="match status" value="1"/>
</dbReference>
<dbReference type="SUPFAM" id="SSF63562">
    <property type="entry name" value="RPB6/omega subunit-like"/>
    <property type="match status" value="1"/>
</dbReference>
<sequence length="70" mass="7752">MLNPSIDSLLTKIDSKYTLVTVAAKRAREMQLANNCVVEKPVSHKCVGKALEEIDMEALSYVPSEDKVTE</sequence>
<organism>
    <name type="scientific">Bacillus cereus (strain AH187)</name>
    <dbReference type="NCBI Taxonomy" id="405534"/>
    <lineage>
        <taxon>Bacteria</taxon>
        <taxon>Bacillati</taxon>
        <taxon>Bacillota</taxon>
        <taxon>Bacilli</taxon>
        <taxon>Bacillales</taxon>
        <taxon>Bacillaceae</taxon>
        <taxon>Bacillus</taxon>
        <taxon>Bacillus cereus group</taxon>
    </lineage>
</organism>
<proteinExistence type="inferred from homology"/>
<reference key="1">
    <citation type="submission" date="2008-10" db="EMBL/GenBank/DDBJ databases">
        <title>Genome sequence of Bacillus cereus AH187.</title>
        <authorList>
            <person name="Dodson R.J."/>
            <person name="Durkin A.S."/>
            <person name="Rosovitz M.J."/>
            <person name="Rasko D.A."/>
            <person name="Kolsto A.B."/>
            <person name="Okstad O.A."/>
            <person name="Ravel J."/>
            <person name="Sutton G."/>
        </authorList>
    </citation>
    <scope>NUCLEOTIDE SEQUENCE [LARGE SCALE GENOMIC DNA]</scope>
    <source>
        <strain>AH187</strain>
    </source>
</reference>
<protein>
    <recommendedName>
        <fullName evidence="1">DNA-directed RNA polymerase subunit omega</fullName>
        <shortName evidence="1">RNAP omega subunit</shortName>
        <ecNumber evidence="1">2.7.7.6</ecNumber>
    </recommendedName>
    <alternativeName>
        <fullName evidence="1">RNA polymerase omega subunit</fullName>
    </alternativeName>
    <alternativeName>
        <fullName evidence="1">Transcriptase subunit omega</fullName>
    </alternativeName>
</protein>
<accession>B7HLK3</accession>